<dbReference type="EC" id="1.1.1.25" evidence="1"/>
<dbReference type="EMBL" id="CR543861">
    <property type="protein sequence ID" value="CAG67361.1"/>
    <property type="molecule type" value="Genomic_DNA"/>
</dbReference>
<dbReference type="RefSeq" id="WP_004920348.1">
    <property type="nucleotide sequence ID" value="NC_005966.1"/>
</dbReference>
<dbReference type="SMR" id="Q6FEZ7"/>
<dbReference type="STRING" id="202950.GCA_001485005_00674"/>
<dbReference type="GeneID" id="45232915"/>
<dbReference type="KEGG" id="aci:ACIAD0418"/>
<dbReference type="eggNOG" id="COG0169">
    <property type="taxonomic scope" value="Bacteria"/>
</dbReference>
<dbReference type="HOGENOM" id="CLU_044063_2_1_6"/>
<dbReference type="OrthoDB" id="9776868at2"/>
<dbReference type="BioCyc" id="ASP62977:ACIAD_RS01935-MONOMER"/>
<dbReference type="UniPathway" id="UPA00053">
    <property type="reaction ID" value="UER00087"/>
</dbReference>
<dbReference type="Proteomes" id="UP000000430">
    <property type="component" value="Chromosome"/>
</dbReference>
<dbReference type="GO" id="GO:0005829">
    <property type="term" value="C:cytosol"/>
    <property type="evidence" value="ECO:0007669"/>
    <property type="project" value="TreeGrafter"/>
</dbReference>
<dbReference type="GO" id="GO:0050661">
    <property type="term" value="F:NADP binding"/>
    <property type="evidence" value="ECO:0007669"/>
    <property type="project" value="InterPro"/>
</dbReference>
<dbReference type="GO" id="GO:0004764">
    <property type="term" value="F:shikimate 3-dehydrogenase (NADP+) activity"/>
    <property type="evidence" value="ECO:0007669"/>
    <property type="project" value="UniProtKB-UniRule"/>
</dbReference>
<dbReference type="GO" id="GO:0008652">
    <property type="term" value="P:amino acid biosynthetic process"/>
    <property type="evidence" value="ECO:0007669"/>
    <property type="project" value="UniProtKB-KW"/>
</dbReference>
<dbReference type="GO" id="GO:0009073">
    <property type="term" value="P:aromatic amino acid family biosynthetic process"/>
    <property type="evidence" value="ECO:0007669"/>
    <property type="project" value="UniProtKB-KW"/>
</dbReference>
<dbReference type="GO" id="GO:0009423">
    <property type="term" value="P:chorismate biosynthetic process"/>
    <property type="evidence" value="ECO:0007669"/>
    <property type="project" value="UniProtKB-UniRule"/>
</dbReference>
<dbReference type="GO" id="GO:0019632">
    <property type="term" value="P:shikimate metabolic process"/>
    <property type="evidence" value="ECO:0007669"/>
    <property type="project" value="InterPro"/>
</dbReference>
<dbReference type="CDD" id="cd01065">
    <property type="entry name" value="NAD_bind_Shikimate_DH"/>
    <property type="match status" value="1"/>
</dbReference>
<dbReference type="FunFam" id="3.40.50.10860:FF:000006">
    <property type="entry name" value="Shikimate dehydrogenase (NADP(+))"/>
    <property type="match status" value="1"/>
</dbReference>
<dbReference type="Gene3D" id="3.40.50.10860">
    <property type="entry name" value="Leucine Dehydrogenase, chain A, domain 1"/>
    <property type="match status" value="1"/>
</dbReference>
<dbReference type="Gene3D" id="3.40.50.720">
    <property type="entry name" value="NAD(P)-binding Rossmann-like Domain"/>
    <property type="match status" value="1"/>
</dbReference>
<dbReference type="HAMAP" id="MF_00222">
    <property type="entry name" value="Shikimate_DH_AroE"/>
    <property type="match status" value="1"/>
</dbReference>
<dbReference type="InterPro" id="IPR046346">
    <property type="entry name" value="Aminoacid_DH-like_N_sf"/>
</dbReference>
<dbReference type="InterPro" id="IPR036291">
    <property type="entry name" value="NAD(P)-bd_dom_sf"/>
</dbReference>
<dbReference type="InterPro" id="IPR041121">
    <property type="entry name" value="SDH_C"/>
</dbReference>
<dbReference type="InterPro" id="IPR011342">
    <property type="entry name" value="Shikimate_DH"/>
</dbReference>
<dbReference type="InterPro" id="IPR013708">
    <property type="entry name" value="Shikimate_DH-bd_N"/>
</dbReference>
<dbReference type="InterPro" id="IPR022893">
    <property type="entry name" value="Shikimate_DH_fam"/>
</dbReference>
<dbReference type="InterPro" id="IPR006151">
    <property type="entry name" value="Shikm_DH/Glu-tRNA_Rdtase"/>
</dbReference>
<dbReference type="NCBIfam" id="TIGR00507">
    <property type="entry name" value="aroE"/>
    <property type="match status" value="1"/>
</dbReference>
<dbReference type="NCBIfam" id="NF001310">
    <property type="entry name" value="PRK00258.1-2"/>
    <property type="match status" value="1"/>
</dbReference>
<dbReference type="PANTHER" id="PTHR21089:SF1">
    <property type="entry name" value="BIFUNCTIONAL 3-DEHYDROQUINATE DEHYDRATASE_SHIKIMATE DEHYDROGENASE, CHLOROPLASTIC"/>
    <property type="match status" value="1"/>
</dbReference>
<dbReference type="PANTHER" id="PTHR21089">
    <property type="entry name" value="SHIKIMATE DEHYDROGENASE"/>
    <property type="match status" value="1"/>
</dbReference>
<dbReference type="Pfam" id="PF18317">
    <property type="entry name" value="SDH_C"/>
    <property type="match status" value="1"/>
</dbReference>
<dbReference type="Pfam" id="PF01488">
    <property type="entry name" value="Shikimate_DH"/>
    <property type="match status" value="1"/>
</dbReference>
<dbReference type="Pfam" id="PF08501">
    <property type="entry name" value="Shikimate_dh_N"/>
    <property type="match status" value="1"/>
</dbReference>
<dbReference type="SUPFAM" id="SSF53223">
    <property type="entry name" value="Aminoacid dehydrogenase-like, N-terminal domain"/>
    <property type="match status" value="1"/>
</dbReference>
<dbReference type="SUPFAM" id="SSF51735">
    <property type="entry name" value="NAD(P)-binding Rossmann-fold domains"/>
    <property type="match status" value="1"/>
</dbReference>
<organism>
    <name type="scientific">Acinetobacter baylyi (strain ATCC 33305 / BD413 / ADP1)</name>
    <dbReference type="NCBI Taxonomy" id="62977"/>
    <lineage>
        <taxon>Bacteria</taxon>
        <taxon>Pseudomonadati</taxon>
        <taxon>Pseudomonadota</taxon>
        <taxon>Gammaproteobacteria</taxon>
        <taxon>Moraxellales</taxon>
        <taxon>Moraxellaceae</taxon>
        <taxon>Acinetobacter</taxon>
    </lineage>
</organism>
<comment type="function">
    <text evidence="1">Involved in the biosynthesis of the chorismate, which leads to the biosynthesis of aromatic amino acids. Catalyzes the reversible NADPH linked reduction of 3-dehydroshikimate (DHSA) to yield shikimate (SA).</text>
</comment>
<comment type="catalytic activity">
    <reaction evidence="1">
        <text>shikimate + NADP(+) = 3-dehydroshikimate + NADPH + H(+)</text>
        <dbReference type="Rhea" id="RHEA:17737"/>
        <dbReference type="ChEBI" id="CHEBI:15378"/>
        <dbReference type="ChEBI" id="CHEBI:16630"/>
        <dbReference type="ChEBI" id="CHEBI:36208"/>
        <dbReference type="ChEBI" id="CHEBI:57783"/>
        <dbReference type="ChEBI" id="CHEBI:58349"/>
        <dbReference type="EC" id="1.1.1.25"/>
    </reaction>
</comment>
<comment type="pathway">
    <text evidence="1">Metabolic intermediate biosynthesis; chorismate biosynthesis; chorismate from D-erythrose 4-phosphate and phosphoenolpyruvate: step 4/7.</text>
</comment>
<comment type="subunit">
    <text evidence="1">Homodimer.</text>
</comment>
<comment type="similarity">
    <text evidence="1">Belongs to the shikimate dehydrogenase family.</text>
</comment>
<accession>Q6FEZ7</accession>
<keyword id="KW-0028">Amino-acid biosynthesis</keyword>
<keyword id="KW-0057">Aromatic amino acid biosynthesis</keyword>
<keyword id="KW-0521">NADP</keyword>
<keyword id="KW-0560">Oxidoreductase</keyword>
<reference key="1">
    <citation type="journal article" date="2004" name="Nucleic Acids Res.">
        <title>Unique features revealed by the genome sequence of Acinetobacter sp. ADP1, a versatile and naturally transformation competent bacterium.</title>
        <authorList>
            <person name="Barbe V."/>
            <person name="Vallenet D."/>
            <person name="Fonknechten N."/>
            <person name="Kreimeyer A."/>
            <person name="Oztas S."/>
            <person name="Labarre L."/>
            <person name="Cruveiller S."/>
            <person name="Robert C."/>
            <person name="Duprat S."/>
            <person name="Wincker P."/>
            <person name="Ornston L.N."/>
            <person name="Weissenbach J."/>
            <person name="Marliere P."/>
            <person name="Cohen G.N."/>
            <person name="Medigue C."/>
        </authorList>
    </citation>
    <scope>NUCLEOTIDE SEQUENCE [LARGE SCALE GENOMIC DNA]</scope>
    <source>
        <strain>ATCC 33305 / BD413 / ADP1</strain>
    </source>
</reference>
<sequence length="262" mass="28409">MTKQFAVIGNPIEQSRSPELHHAFAEKLGIELNYSKRLAPLDGFEANVKTFFDQGGLGINVTVPFKEQAFAMCHQLTERAKIAKAVNTLWIENGQLHGDNTDGQGLVDAIQALNWPLQGTRILILGAGGATRGVIYPLVQAGVTEIVIANRTQQRAEQLVQDLAGSVSEATLRVMTLDQLHGNFDLVINATSASLSGDALVLPETLQFKYAYEMAYGKPSSFLDQAKARGVPTTEGFGMLVGQAIEAFSIWHGVKPNLTDFL</sequence>
<proteinExistence type="inferred from homology"/>
<name>AROE_ACIAD</name>
<protein>
    <recommendedName>
        <fullName evidence="1">Shikimate dehydrogenase (NADP(+))</fullName>
        <shortName evidence="1">SDH</shortName>
        <ecNumber evidence="1">1.1.1.25</ecNumber>
    </recommendedName>
</protein>
<evidence type="ECO:0000255" key="1">
    <source>
        <dbReference type="HAMAP-Rule" id="MF_00222"/>
    </source>
</evidence>
<feature type="chain" id="PRO_0000325093" description="Shikimate dehydrogenase (NADP(+))">
    <location>
        <begin position="1"/>
        <end position="262"/>
    </location>
</feature>
<feature type="active site" description="Proton acceptor" evidence="1">
    <location>
        <position position="66"/>
    </location>
</feature>
<feature type="binding site" evidence="1">
    <location>
        <begin position="15"/>
        <end position="17"/>
    </location>
    <ligand>
        <name>shikimate</name>
        <dbReference type="ChEBI" id="CHEBI:36208"/>
    </ligand>
</feature>
<feature type="binding site" evidence="1">
    <location>
        <position position="62"/>
    </location>
    <ligand>
        <name>shikimate</name>
        <dbReference type="ChEBI" id="CHEBI:36208"/>
    </ligand>
</feature>
<feature type="binding site" evidence="1">
    <location>
        <position position="78"/>
    </location>
    <ligand>
        <name>NADP(+)</name>
        <dbReference type="ChEBI" id="CHEBI:58349"/>
    </ligand>
</feature>
<feature type="binding site" evidence="1">
    <location>
        <position position="87"/>
    </location>
    <ligand>
        <name>shikimate</name>
        <dbReference type="ChEBI" id="CHEBI:36208"/>
    </ligand>
</feature>
<feature type="binding site" evidence="1">
    <location>
        <position position="102"/>
    </location>
    <ligand>
        <name>shikimate</name>
        <dbReference type="ChEBI" id="CHEBI:36208"/>
    </ligand>
</feature>
<feature type="binding site" evidence="1">
    <location>
        <begin position="126"/>
        <end position="130"/>
    </location>
    <ligand>
        <name>NADP(+)</name>
        <dbReference type="ChEBI" id="CHEBI:58349"/>
    </ligand>
</feature>
<feature type="binding site" evidence="1">
    <location>
        <begin position="150"/>
        <end position="155"/>
    </location>
    <ligand>
        <name>NADP(+)</name>
        <dbReference type="ChEBI" id="CHEBI:58349"/>
    </ligand>
</feature>
<feature type="binding site" evidence="1">
    <location>
        <position position="214"/>
    </location>
    <ligand>
        <name>NADP(+)</name>
        <dbReference type="ChEBI" id="CHEBI:58349"/>
    </ligand>
</feature>
<feature type="binding site" evidence="1">
    <location>
        <position position="216"/>
    </location>
    <ligand>
        <name>shikimate</name>
        <dbReference type="ChEBI" id="CHEBI:36208"/>
    </ligand>
</feature>
<feature type="binding site" evidence="1">
    <location>
        <position position="236"/>
    </location>
    <ligand>
        <name>NADP(+)</name>
        <dbReference type="ChEBI" id="CHEBI:58349"/>
    </ligand>
</feature>
<gene>
    <name evidence="1" type="primary">aroE</name>
    <name type="ordered locus">ACIAD0418</name>
</gene>